<sequence length="56" mass="6316">MAVQKSKKSRSMRGMRRSHDALTTMALSVDPTSGETHLRHNVTADGFYRGRKVINK</sequence>
<feature type="chain" id="PRO_1000120081" description="Large ribosomal subunit protein bL32">
    <location>
        <begin position="1"/>
        <end position="56"/>
    </location>
</feature>
<feature type="region of interest" description="Disordered" evidence="2">
    <location>
        <begin position="1"/>
        <end position="22"/>
    </location>
</feature>
<feature type="compositionally biased region" description="Basic residues" evidence="2">
    <location>
        <begin position="1"/>
        <end position="16"/>
    </location>
</feature>
<gene>
    <name evidence="1" type="primary">rpmF</name>
    <name type="ordered locus">VSAL_I2237</name>
</gene>
<comment type="similarity">
    <text evidence="1">Belongs to the bacterial ribosomal protein bL32 family.</text>
</comment>
<protein>
    <recommendedName>
        <fullName evidence="1">Large ribosomal subunit protein bL32</fullName>
    </recommendedName>
    <alternativeName>
        <fullName evidence="3">50S ribosomal protein L32</fullName>
    </alternativeName>
</protein>
<dbReference type="EMBL" id="FM178379">
    <property type="protein sequence ID" value="CAQ79921.1"/>
    <property type="molecule type" value="Genomic_DNA"/>
</dbReference>
<dbReference type="RefSeq" id="WP_012550751.1">
    <property type="nucleotide sequence ID" value="NC_011312.1"/>
</dbReference>
<dbReference type="SMR" id="B6EIZ6"/>
<dbReference type="KEGG" id="vsa:VSAL_I2237"/>
<dbReference type="eggNOG" id="COG0333">
    <property type="taxonomic scope" value="Bacteria"/>
</dbReference>
<dbReference type="HOGENOM" id="CLU_129084_2_1_6"/>
<dbReference type="Proteomes" id="UP000001730">
    <property type="component" value="Chromosome 1"/>
</dbReference>
<dbReference type="GO" id="GO:0015934">
    <property type="term" value="C:large ribosomal subunit"/>
    <property type="evidence" value="ECO:0007669"/>
    <property type="project" value="InterPro"/>
</dbReference>
<dbReference type="GO" id="GO:0003735">
    <property type="term" value="F:structural constituent of ribosome"/>
    <property type="evidence" value="ECO:0007669"/>
    <property type="project" value="InterPro"/>
</dbReference>
<dbReference type="GO" id="GO:0006412">
    <property type="term" value="P:translation"/>
    <property type="evidence" value="ECO:0007669"/>
    <property type="project" value="UniProtKB-UniRule"/>
</dbReference>
<dbReference type="HAMAP" id="MF_00340">
    <property type="entry name" value="Ribosomal_bL32"/>
    <property type="match status" value="1"/>
</dbReference>
<dbReference type="InterPro" id="IPR002677">
    <property type="entry name" value="Ribosomal_bL32"/>
</dbReference>
<dbReference type="InterPro" id="IPR044957">
    <property type="entry name" value="Ribosomal_bL32_bact"/>
</dbReference>
<dbReference type="InterPro" id="IPR011332">
    <property type="entry name" value="Ribosomal_zn-bd"/>
</dbReference>
<dbReference type="NCBIfam" id="TIGR01031">
    <property type="entry name" value="rpmF_bact"/>
    <property type="match status" value="1"/>
</dbReference>
<dbReference type="PANTHER" id="PTHR35534">
    <property type="entry name" value="50S RIBOSOMAL PROTEIN L32"/>
    <property type="match status" value="1"/>
</dbReference>
<dbReference type="PANTHER" id="PTHR35534:SF1">
    <property type="entry name" value="LARGE RIBOSOMAL SUBUNIT PROTEIN BL32"/>
    <property type="match status" value="1"/>
</dbReference>
<dbReference type="Pfam" id="PF01783">
    <property type="entry name" value="Ribosomal_L32p"/>
    <property type="match status" value="1"/>
</dbReference>
<dbReference type="SUPFAM" id="SSF57829">
    <property type="entry name" value="Zn-binding ribosomal proteins"/>
    <property type="match status" value="1"/>
</dbReference>
<keyword id="KW-0687">Ribonucleoprotein</keyword>
<keyword id="KW-0689">Ribosomal protein</keyword>
<organism>
    <name type="scientific">Aliivibrio salmonicida (strain LFI1238)</name>
    <name type="common">Vibrio salmonicida (strain LFI1238)</name>
    <dbReference type="NCBI Taxonomy" id="316275"/>
    <lineage>
        <taxon>Bacteria</taxon>
        <taxon>Pseudomonadati</taxon>
        <taxon>Pseudomonadota</taxon>
        <taxon>Gammaproteobacteria</taxon>
        <taxon>Vibrionales</taxon>
        <taxon>Vibrionaceae</taxon>
        <taxon>Aliivibrio</taxon>
    </lineage>
</organism>
<reference key="1">
    <citation type="journal article" date="2008" name="BMC Genomics">
        <title>The genome sequence of the fish pathogen Aliivibrio salmonicida strain LFI1238 shows extensive evidence of gene decay.</title>
        <authorList>
            <person name="Hjerde E."/>
            <person name="Lorentzen M.S."/>
            <person name="Holden M.T."/>
            <person name="Seeger K."/>
            <person name="Paulsen S."/>
            <person name="Bason N."/>
            <person name="Churcher C."/>
            <person name="Harris D."/>
            <person name="Norbertczak H."/>
            <person name="Quail M.A."/>
            <person name="Sanders S."/>
            <person name="Thurston S."/>
            <person name="Parkhill J."/>
            <person name="Willassen N.P."/>
            <person name="Thomson N.R."/>
        </authorList>
    </citation>
    <scope>NUCLEOTIDE SEQUENCE [LARGE SCALE GENOMIC DNA]</scope>
    <source>
        <strain>LFI1238</strain>
    </source>
</reference>
<name>RL32_ALISL</name>
<evidence type="ECO:0000255" key="1">
    <source>
        <dbReference type="HAMAP-Rule" id="MF_00340"/>
    </source>
</evidence>
<evidence type="ECO:0000256" key="2">
    <source>
        <dbReference type="SAM" id="MobiDB-lite"/>
    </source>
</evidence>
<evidence type="ECO:0000305" key="3"/>
<proteinExistence type="inferred from homology"/>
<accession>B6EIZ6</accession>